<accession>Q5M4W5</accession>
<feature type="chain" id="PRO_0000175039" description="Thymidine kinase">
    <location>
        <begin position="1"/>
        <end position="198"/>
    </location>
</feature>
<feature type="active site" description="Proton acceptor" evidence="1">
    <location>
        <position position="86"/>
    </location>
</feature>
<feature type="binding site" evidence="1">
    <location>
        <begin position="9"/>
        <end position="16"/>
    </location>
    <ligand>
        <name>ATP</name>
        <dbReference type="ChEBI" id="CHEBI:30616"/>
    </ligand>
</feature>
<feature type="binding site" evidence="1">
    <location>
        <begin position="85"/>
        <end position="88"/>
    </location>
    <ligand>
        <name>ATP</name>
        <dbReference type="ChEBI" id="CHEBI:30616"/>
    </ligand>
</feature>
<feature type="binding site" evidence="1">
    <location>
        <position position="143"/>
    </location>
    <ligand>
        <name>Zn(2+)</name>
        <dbReference type="ChEBI" id="CHEBI:29105"/>
    </ligand>
</feature>
<feature type="binding site" evidence="1">
    <location>
        <position position="146"/>
    </location>
    <ligand>
        <name>Zn(2+)</name>
        <dbReference type="ChEBI" id="CHEBI:29105"/>
    </ligand>
</feature>
<feature type="binding site" evidence="1">
    <location>
        <position position="180"/>
    </location>
    <ligand>
        <name>Zn(2+)</name>
        <dbReference type="ChEBI" id="CHEBI:29105"/>
    </ligand>
</feature>
<feature type="binding site" evidence="1">
    <location>
        <position position="183"/>
    </location>
    <ligand>
        <name>Zn(2+)</name>
        <dbReference type="ChEBI" id="CHEBI:29105"/>
    </ligand>
</feature>
<proteinExistence type="inferred from homology"/>
<reference key="1">
    <citation type="journal article" date="2004" name="Nat. Biotechnol.">
        <title>Complete sequence and comparative genome analysis of the dairy bacterium Streptococcus thermophilus.</title>
        <authorList>
            <person name="Bolotin A."/>
            <person name="Quinquis B."/>
            <person name="Renault P."/>
            <person name="Sorokin A."/>
            <person name="Ehrlich S.D."/>
            <person name="Kulakauskas S."/>
            <person name="Lapidus A."/>
            <person name="Goltsman E."/>
            <person name="Mazur M."/>
            <person name="Pusch G.D."/>
            <person name="Fonstein M."/>
            <person name="Overbeek R."/>
            <person name="Kyprides N."/>
            <person name="Purnelle B."/>
            <person name="Prozzi D."/>
            <person name="Ngui K."/>
            <person name="Masuy D."/>
            <person name="Hancy F."/>
            <person name="Burteau S."/>
            <person name="Boutry M."/>
            <person name="Delcour J."/>
            <person name="Goffeau A."/>
            <person name="Hols P."/>
        </authorList>
    </citation>
    <scope>NUCLEOTIDE SEQUENCE [LARGE SCALE GENOMIC DNA]</scope>
    <source>
        <strain>ATCC BAA-250 / LMG 18311</strain>
    </source>
</reference>
<sequence>MAQLYFRYGTMNSGKSIEILKVAYNYEEQGKPVVLLTSRLDDRDEVGYISSRIGMRRKAYPIGNDTDIFDYIDDISPRPYCVLIDEAQFLTRANVYDLARIVDELDIPVMAFGLKNDFQNNLFEGSKYLLLLSDKIEEIKTICHYCSRKATMVLRMEDGEPVYEGVQVQIGGHESYISVCRKHWFNPPRERIVPLKQN</sequence>
<protein>
    <recommendedName>
        <fullName evidence="1">Thymidine kinase</fullName>
        <ecNumber evidence="1">2.7.1.21</ecNumber>
    </recommendedName>
</protein>
<gene>
    <name evidence="1" type="primary">tdk</name>
    <name type="ordered locus">stu0751</name>
</gene>
<name>KITH_STRT2</name>
<dbReference type="EC" id="2.7.1.21" evidence="1"/>
<dbReference type="EMBL" id="CP000023">
    <property type="protein sequence ID" value="AAV60442.1"/>
    <property type="molecule type" value="Genomic_DNA"/>
</dbReference>
<dbReference type="RefSeq" id="WP_011225787.1">
    <property type="nucleotide sequence ID" value="NC_006448.1"/>
</dbReference>
<dbReference type="SMR" id="Q5M4W5"/>
<dbReference type="STRING" id="264199.stu0751"/>
<dbReference type="KEGG" id="stl:stu0751"/>
<dbReference type="eggNOG" id="COG1435">
    <property type="taxonomic scope" value="Bacteria"/>
</dbReference>
<dbReference type="HOGENOM" id="CLU_064400_2_2_9"/>
<dbReference type="Proteomes" id="UP000001170">
    <property type="component" value="Chromosome"/>
</dbReference>
<dbReference type="GO" id="GO:0005829">
    <property type="term" value="C:cytosol"/>
    <property type="evidence" value="ECO:0007669"/>
    <property type="project" value="TreeGrafter"/>
</dbReference>
<dbReference type="GO" id="GO:0005524">
    <property type="term" value="F:ATP binding"/>
    <property type="evidence" value="ECO:0007669"/>
    <property type="project" value="UniProtKB-UniRule"/>
</dbReference>
<dbReference type="GO" id="GO:0004797">
    <property type="term" value="F:thymidine kinase activity"/>
    <property type="evidence" value="ECO:0007669"/>
    <property type="project" value="UniProtKB-UniRule"/>
</dbReference>
<dbReference type="GO" id="GO:0008270">
    <property type="term" value="F:zinc ion binding"/>
    <property type="evidence" value="ECO:0007669"/>
    <property type="project" value="UniProtKB-UniRule"/>
</dbReference>
<dbReference type="GO" id="GO:0071897">
    <property type="term" value="P:DNA biosynthetic process"/>
    <property type="evidence" value="ECO:0007669"/>
    <property type="project" value="UniProtKB-KW"/>
</dbReference>
<dbReference type="GO" id="GO:0046104">
    <property type="term" value="P:thymidine metabolic process"/>
    <property type="evidence" value="ECO:0007669"/>
    <property type="project" value="TreeGrafter"/>
</dbReference>
<dbReference type="Gene3D" id="3.30.60.20">
    <property type="match status" value="1"/>
</dbReference>
<dbReference type="Gene3D" id="3.40.50.300">
    <property type="entry name" value="P-loop containing nucleotide triphosphate hydrolases"/>
    <property type="match status" value="1"/>
</dbReference>
<dbReference type="HAMAP" id="MF_00124">
    <property type="entry name" value="Thymidine_kinase"/>
    <property type="match status" value="1"/>
</dbReference>
<dbReference type="InterPro" id="IPR027417">
    <property type="entry name" value="P-loop_NTPase"/>
</dbReference>
<dbReference type="InterPro" id="IPR001267">
    <property type="entry name" value="Thymidine_kinase"/>
</dbReference>
<dbReference type="InterPro" id="IPR020633">
    <property type="entry name" value="Thymidine_kinase_CS"/>
</dbReference>
<dbReference type="NCBIfam" id="NF003299">
    <property type="entry name" value="PRK04296.1-4"/>
    <property type="match status" value="1"/>
</dbReference>
<dbReference type="NCBIfam" id="NF003300">
    <property type="entry name" value="PRK04296.1-5"/>
    <property type="match status" value="1"/>
</dbReference>
<dbReference type="PANTHER" id="PTHR11441">
    <property type="entry name" value="THYMIDINE KINASE"/>
    <property type="match status" value="1"/>
</dbReference>
<dbReference type="PANTHER" id="PTHR11441:SF0">
    <property type="entry name" value="THYMIDINE KINASE, CYTOSOLIC"/>
    <property type="match status" value="1"/>
</dbReference>
<dbReference type="Pfam" id="PF00265">
    <property type="entry name" value="TK"/>
    <property type="match status" value="1"/>
</dbReference>
<dbReference type="PIRSF" id="PIRSF035805">
    <property type="entry name" value="TK_cell"/>
    <property type="match status" value="1"/>
</dbReference>
<dbReference type="SUPFAM" id="SSF57716">
    <property type="entry name" value="Glucocorticoid receptor-like (DNA-binding domain)"/>
    <property type="match status" value="1"/>
</dbReference>
<dbReference type="SUPFAM" id="SSF52540">
    <property type="entry name" value="P-loop containing nucleoside triphosphate hydrolases"/>
    <property type="match status" value="1"/>
</dbReference>
<dbReference type="PROSITE" id="PS00603">
    <property type="entry name" value="TK_CELLULAR_TYPE"/>
    <property type="match status" value="1"/>
</dbReference>
<comment type="catalytic activity">
    <reaction evidence="1">
        <text>thymidine + ATP = dTMP + ADP + H(+)</text>
        <dbReference type="Rhea" id="RHEA:19129"/>
        <dbReference type="ChEBI" id="CHEBI:15378"/>
        <dbReference type="ChEBI" id="CHEBI:17748"/>
        <dbReference type="ChEBI" id="CHEBI:30616"/>
        <dbReference type="ChEBI" id="CHEBI:63528"/>
        <dbReference type="ChEBI" id="CHEBI:456216"/>
        <dbReference type="EC" id="2.7.1.21"/>
    </reaction>
</comment>
<comment type="subunit">
    <text evidence="1">Homotetramer.</text>
</comment>
<comment type="subcellular location">
    <subcellularLocation>
        <location evidence="1">Cytoplasm</location>
    </subcellularLocation>
</comment>
<comment type="similarity">
    <text evidence="1">Belongs to the thymidine kinase family.</text>
</comment>
<organism>
    <name type="scientific">Streptococcus thermophilus (strain ATCC BAA-250 / LMG 18311)</name>
    <dbReference type="NCBI Taxonomy" id="264199"/>
    <lineage>
        <taxon>Bacteria</taxon>
        <taxon>Bacillati</taxon>
        <taxon>Bacillota</taxon>
        <taxon>Bacilli</taxon>
        <taxon>Lactobacillales</taxon>
        <taxon>Streptococcaceae</taxon>
        <taxon>Streptococcus</taxon>
    </lineage>
</organism>
<evidence type="ECO:0000255" key="1">
    <source>
        <dbReference type="HAMAP-Rule" id="MF_00124"/>
    </source>
</evidence>
<keyword id="KW-0067">ATP-binding</keyword>
<keyword id="KW-0963">Cytoplasm</keyword>
<keyword id="KW-0237">DNA synthesis</keyword>
<keyword id="KW-0418">Kinase</keyword>
<keyword id="KW-0479">Metal-binding</keyword>
<keyword id="KW-0547">Nucleotide-binding</keyword>
<keyword id="KW-1185">Reference proteome</keyword>
<keyword id="KW-0808">Transferase</keyword>
<keyword id="KW-0862">Zinc</keyword>